<organismHost>
    <name type="scientific">Beta vulgaris</name>
    <name type="common">Sugar beet</name>
    <dbReference type="NCBI Taxonomy" id="161934"/>
</organismHost>
<organismHost>
    <name type="scientific">Capsicum annuum</name>
    <name type="common">Capsicum pepper</name>
    <dbReference type="NCBI Taxonomy" id="4072"/>
</organismHost>
<organismHost>
    <name type="scientific">Hyacinthus</name>
    <dbReference type="NCBI Taxonomy" id="82024"/>
</organismHost>
<organismHost>
    <name type="scientific">Narcissus pseudonarcissus</name>
    <name type="common">Daffodil</name>
    <dbReference type="NCBI Taxonomy" id="39639"/>
</organismHost>
<organismHost>
    <name type="scientific">Nicotiana tabacum</name>
    <name type="common">Common tobacco</name>
    <dbReference type="NCBI Taxonomy" id="4097"/>
</organismHost>
<organismHost>
    <name type="scientific">Solanum tuberosum</name>
    <name type="common">Potato</name>
    <dbReference type="NCBI Taxonomy" id="4113"/>
</organismHost>
<organismHost>
    <name type="scientific">Spinacia oleracea</name>
    <name type="common">Spinach</name>
    <dbReference type="NCBI Taxonomy" id="3562"/>
</organismHost>
<organismHost>
    <name type="scientific">Stellaria media</name>
    <name type="common">Common chickweed</name>
    <name type="synonym">Alsine media</name>
    <dbReference type="NCBI Taxonomy" id="13274"/>
</organismHost>
<organismHost>
    <name type="scientific">Tulipa</name>
    <dbReference type="NCBI Taxonomy" id="13305"/>
</organismHost>
<organismHost>
    <name type="scientific">Viola arvensis</name>
    <name type="common">European field pansy</name>
    <name type="synonym">Field violet</name>
    <dbReference type="NCBI Taxonomy" id="97415"/>
</organismHost>
<dbReference type="EMBL" id="X03955">
    <property type="protein sequence ID" value="CAA27586.1"/>
    <property type="molecule type" value="Genomic_RNA"/>
</dbReference>
<dbReference type="InterPro" id="IPR028919">
    <property type="entry name" value="Viral_movement"/>
</dbReference>
<dbReference type="Pfam" id="PF01107">
    <property type="entry name" value="MP"/>
    <property type="match status" value="1"/>
</dbReference>
<reference key="1">
    <citation type="journal article" date="1986" name="Nucleic Acids Res.">
        <title>RNA 2 of tobacco rattle virus strain TCM encodes an unexpected gene.</title>
        <authorList>
            <person name="Angenent G.C."/>
            <person name="Linthorst H.J.M."/>
            <person name="van Belkum A.F."/>
            <person name="Cornelissen B.J.C."/>
            <person name="Bol J.F."/>
        </authorList>
    </citation>
    <scope>NUCLEOTIDE SEQUENCE [GENOMIC RNA]</scope>
</reference>
<protein>
    <recommendedName>
        <fullName>29 kDa protein</fullName>
    </recommendedName>
</protein>
<sequence>ACDNCSVAQYKVEYSISTQENVLDVWKVGCISEGVPVCDGTYPFSIEVSLIWVATDSTRRLNVEELNSSDYIEGDFTDQEVFGEFMSLKQVEMKTIEAKYDGPYRPATTRPKSLVSSEDVKGASKKKNSS</sequence>
<name>V29K_TRVTC</name>
<evidence type="ECO:0000256" key="1">
    <source>
        <dbReference type="SAM" id="MobiDB-lite"/>
    </source>
</evidence>
<proteinExistence type="predicted"/>
<feature type="chain" id="PRO_0000222518" description="29 kDa protein">
    <location>
        <begin position="1" status="less than"/>
        <end position="130"/>
    </location>
</feature>
<feature type="region of interest" description="Disordered" evidence="1">
    <location>
        <begin position="100"/>
        <end position="130"/>
    </location>
</feature>
<feature type="non-terminal residue">
    <location>
        <position position="1"/>
    </location>
</feature>
<organism>
    <name type="scientific">Tobacco rattle virus (strain TCM)</name>
    <dbReference type="NCBI Taxonomy" id="12299"/>
    <lineage>
        <taxon>Viruses</taxon>
        <taxon>Riboviria</taxon>
        <taxon>Orthornavirae</taxon>
        <taxon>Kitrinoviricota</taxon>
        <taxon>Alsuviricetes</taxon>
        <taxon>Martellivirales</taxon>
        <taxon>Virgaviridae</taxon>
        <taxon>Tobravirus</taxon>
        <taxon>Tobacco rattle virus</taxon>
    </lineage>
</organism>
<accession>P05074</accession>